<proteinExistence type="evidence at protein level"/>
<accession>P35760</accession>
<reference key="1">
    <citation type="journal article" date="1993" name="J. Immunol.">
        <title>Sequence analysis and antigenic cross-reactivity of a venom allergen, antigen 5, from hornets, wasps, and yellow jackets.</title>
        <authorList>
            <person name="Lu G."/>
            <person name="Villalba M."/>
            <person name="Coscia M.R."/>
            <person name="Hoffman D.R."/>
            <person name="King T.P."/>
        </authorList>
    </citation>
    <scope>PROTEIN SEQUENCE</scope>
    <source>
        <tissue>Venom</tissue>
    </source>
</reference>
<organism>
    <name type="scientific">Vespula maculifrons</name>
    <name type="common">Eastern yellow jacket</name>
    <name type="synonym">Wasp</name>
    <dbReference type="NCBI Taxonomy" id="7453"/>
    <lineage>
        <taxon>Eukaryota</taxon>
        <taxon>Metazoa</taxon>
        <taxon>Ecdysozoa</taxon>
        <taxon>Arthropoda</taxon>
        <taxon>Hexapoda</taxon>
        <taxon>Insecta</taxon>
        <taxon>Pterygota</taxon>
        <taxon>Neoptera</taxon>
        <taxon>Endopterygota</taxon>
        <taxon>Hymenoptera</taxon>
        <taxon>Apocrita</taxon>
        <taxon>Aculeata</taxon>
        <taxon>Vespoidea</taxon>
        <taxon>Vespidae</taxon>
        <taxon>Vespinae</taxon>
        <taxon>Vespula</taxon>
    </lineage>
</organism>
<dbReference type="PIR" id="B37329">
    <property type="entry name" value="B37329"/>
</dbReference>
<dbReference type="SMR" id="P35760"/>
<dbReference type="Allergome" id="3516">
    <property type="allergen name" value="Ves m 5.0101"/>
</dbReference>
<dbReference type="Allergome" id="663">
    <property type="allergen name" value="Ves m 5"/>
</dbReference>
<dbReference type="GO" id="GO:0005576">
    <property type="term" value="C:extracellular region"/>
    <property type="evidence" value="ECO:0007669"/>
    <property type="project" value="UniProtKB-SubCell"/>
</dbReference>
<dbReference type="CDD" id="cd05380">
    <property type="entry name" value="CAP_euk"/>
    <property type="match status" value="1"/>
</dbReference>
<dbReference type="Gene3D" id="3.40.33.10">
    <property type="entry name" value="CAP"/>
    <property type="match status" value="1"/>
</dbReference>
<dbReference type="InterPro" id="IPR018244">
    <property type="entry name" value="Allrgn_V5/Tpx1_CS"/>
</dbReference>
<dbReference type="InterPro" id="IPR014044">
    <property type="entry name" value="CAP_dom"/>
</dbReference>
<dbReference type="InterPro" id="IPR035940">
    <property type="entry name" value="CAP_sf"/>
</dbReference>
<dbReference type="InterPro" id="IPR001283">
    <property type="entry name" value="CRISP-related"/>
</dbReference>
<dbReference type="InterPro" id="IPR002413">
    <property type="entry name" value="V5_allergen-like"/>
</dbReference>
<dbReference type="PANTHER" id="PTHR10334">
    <property type="entry name" value="CYSTEINE-RICH SECRETORY PROTEIN-RELATED"/>
    <property type="match status" value="1"/>
</dbReference>
<dbReference type="Pfam" id="PF00188">
    <property type="entry name" value="CAP"/>
    <property type="match status" value="1"/>
</dbReference>
<dbReference type="PRINTS" id="PR00838">
    <property type="entry name" value="V5ALLERGEN"/>
</dbReference>
<dbReference type="PRINTS" id="PR00837">
    <property type="entry name" value="V5TPXLIKE"/>
</dbReference>
<dbReference type="SMART" id="SM00198">
    <property type="entry name" value="SCP"/>
    <property type="match status" value="1"/>
</dbReference>
<dbReference type="SUPFAM" id="SSF55797">
    <property type="entry name" value="PR-1-like"/>
    <property type="match status" value="1"/>
</dbReference>
<dbReference type="PROSITE" id="PS01009">
    <property type="entry name" value="CRISP_1"/>
    <property type="match status" value="1"/>
</dbReference>
<dbReference type="PROSITE" id="PS01010">
    <property type="entry name" value="CRISP_2"/>
    <property type="match status" value="1"/>
</dbReference>
<comment type="subcellular location">
    <subcellularLocation>
        <location>Secreted</location>
    </subcellularLocation>
</comment>
<comment type="tissue specificity">
    <text>Expressed by the venom gland.</text>
</comment>
<comment type="allergen">
    <text>Causes an allergic reaction in human.</text>
</comment>
<comment type="similarity">
    <text evidence="2">Belongs to the CRISP family. Venom allergen 5-like subfamily.</text>
</comment>
<keyword id="KW-0020">Allergen</keyword>
<keyword id="KW-0903">Direct protein sequencing</keyword>
<keyword id="KW-1015">Disulfide bond</keyword>
<keyword id="KW-0964">Secreted</keyword>
<feature type="chain" id="PRO_0000211544" description="Venom allergen 5">
    <location>
        <begin position="1"/>
        <end position="204"/>
    </location>
</feature>
<feature type="domain" description="SCP">
    <location>
        <begin position="45"/>
        <end position="189"/>
    </location>
</feature>
<feature type="disulfide bond" evidence="1">
    <location>
        <begin position="4"/>
        <end position="17"/>
    </location>
</feature>
<feature type="disulfide bond" evidence="1">
    <location>
        <begin position="8"/>
        <end position="101"/>
    </location>
</feature>
<feature type="disulfide bond" evidence="1">
    <location>
        <begin position="26"/>
        <end position="94"/>
    </location>
</feature>
<feature type="disulfide bond" evidence="1">
    <location>
        <begin position="170"/>
        <end position="187"/>
    </location>
</feature>
<evidence type="ECO:0000250" key="1"/>
<evidence type="ECO:0000305" key="2"/>
<name>VA5_VESMC</name>
<sequence>NNYCKIKCLKGGVHTACKYGSLKPNCGNKKVVSYGLTKQEKQDILKEHNDFRQKIARGLETRGNPGPQPPAKNMKNLVWSDELAYIAQVWANQCQYGHDTCRDVAKYQVGQNVALTGSTAAVYNDPVKLVKMWEDEVKDYNPKKKFSENNFLKIGHYTQMVWANTKEVGCGSIKYIQENWHKHYLVCNYGPSGNFQNEELYQTK</sequence>
<protein>
    <recommendedName>
        <fullName>Venom allergen 5</fullName>
    </recommendedName>
    <alternativeName>
        <fullName>Allergen Ves m V</fullName>
    </alternativeName>
    <alternativeName>
        <fullName>Antigen 5</fullName>
        <shortName>Ag5</shortName>
    </alternativeName>
    <alternativeName>
        <fullName>Cysteine-rich venom protein</fullName>
        <shortName>CRVP</shortName>
    </alternativeName>
    <allergenName>Ves m 5</allergenName>
</protein>